<comment type="function">
    <text evidence="1">Catalyzes a salvage reaction resulting in the formation of AMP, that is energically less costly than de novo synthesis.</text>
</comment>
<comment type="catalytic activity">
    <reaction evidence="1">
        <text>AMP + diphosphate = 5-phospho-alpha-D-ribose 1-diphosphate + adenine</text>
        <dbReference type="Rhea" id="RHEA:16609"/>
        <dbReference type="ChEBI" id="CHEBI:16708"/>
        <dbReference type="ChEBI" id="CHEBI:33019"/>
        <dbReference type="ChEBI" id="CHEBI:58017"/>
        <dbReference type="ChEBI" id="CHEBI:456215"/>
        <dbReference type="EC" id="2.4.2.7"/>
    </reaction>
</comment>
<comment type="pathway">
    <text evidence="1">Purine metabolism; AMP biosynthesis via salvage pathway; AMP from adenine: step 1/1.</text>
</comment>
<comment type="subunit">
    <text evidence="1">Homodimer.</text>
</comment>
<comment type="subcellular location">
    <subcellularLocation>
        <location evidence="1">Cytoplasm</location>
    </subcellularLocation>
</comment>
<comment type="similarity">
    <text evidence="1">Belongs to the purine/pyrimidine phosphoribosyltransferase family.</text>
</comment>
<protein>
    <recommendedName>
        <fullName evidence="1">Adenine phosphoribosyltransferase</fullName>
        <shortName evidence="1">APRT</shortName>
        <ecNumber evidence="1">2.4.2.7</ecNumber>
    </recommendedName>
</protein>
<accession>O84001</accession>
<evidence type="ECO:0000255" key="1">
    <source>
        <dbReference type="HAMAP-Rule" id="MF_00004"/>
    </source>
</evidence>
<sequence>MRGIGRYHAPVDGHAALDRAIRKRIDFPKKGILYYDITGVLMNAAVFRYCLDQMVEFYRDEHVTAVAAIESRGFIFAAPFADRMGIPLILVRKAGKLPGDTYSCSYSLEYGKATVEVHKSDVVAGARVLLTDDLIATGGTLNAARTMLRAGGAEVVGFFAVVGLPFLRYHELIGDLPVRTLIEYNQETSN</sequence>
<reference key="1">
    <citation type="journal article" date="1998" name="Science">
        <title>Complete genome sequence of Treponema pallidum, the syphilis spirochete.</title>
        <authorList>
            <person name="Fraser C.M."/>
            <person name="Norris S.J."/>
            <person name="Weinstock G.M."/>
            <person name="White O."/>
            <person name="Sutton G.G."/>
            <person name="Dodson R.J."/>
            <person name="Gwinn M.L."/>
            <person name="Hickey E.K."/>
            <person name="Clayton R.A."/>
            <person name="Ketchum K.A."/>
            <person name="Sodergren E."/>
            <person name="Hardham J.M."/>
            <person name="McLeod M.P."/>
            <person name="Salzberg S.L."/>
            <person name="Peterson J.D."/>
            <person name="Khalak H.G."/>
            <person name="Richardson D.L."/>
            <person name="Howell J.K."/>
            <person name="Chidambaram M."/>
            <person name="Utterback T.R."/>
            <person name="McDonald L.A."/>
            <person name="Artiach P."/>
            <person name="Bowman C."/>
            <person name="Cotton M.D."/>
            <person name="Fujii C."/>
            <person name="Garland S.A."/>
            <person name="Hatch B."/>
            <person name="Horst K."/>
            <person name="Roberts K.M."/>
            <person name="Sandusky M."/>
            <person name="Weidman J.F."/>
            <person name="Smith H.O."/>
            <person name="Venter J.C."/>
        </authorList>
    </citation>
    <scope>NUCLEOTIDE SEQUENCE [LARGE SCALE GENOMIC DNA]</scope>
    <source>
        <strain>Nichols</strain>
    </source>
</reference>
<gene>
    <name evidence="1" type="primary">apt</name>
    <name type="ordered locus">TP_1039</name>
</gene>
<dbReference type="EC" id="2.4.2.7" evidence="1"/>
<dbReference type="EMBL" id="AE000520">
    <property type="protein sequence ID" value="AAC26593.1"/>
    <property type="molecule type" value="Genomic_DNA"/>
</dbReference>
<dbReference type="PIR" id="F71250">
    <property type="entry name" value="F71250"/>
</dbReference>
<dbReference type="RefSeq" id="WP_010882483.1">
    <property type="nucleotide sequence ID" value="NC_021490.2"/>
</dbReference>
<dbReference type="SMR" id="O84001"/>
<dbReference type="IntAct" id="O84001">
    <property type="interactions" value="1"/>
</dbReference>
<dbReference type="STRING" id="243276.TP_1039"/>
<dbReference type="EnsemblBacteria" id="AAC26593">
    <property type="protein sequence ID" value="AAC26593"/>
    <property type="gene ID" value="TP_1039"/>
</dbReference>
<dbReference type="KEGG" id="tpa:TP_1039"/>
<dbReference type="KEGG" id="tpw:TPANIC_1039"/>
<dbReference type="eggNOG" id="COG0503">
    <property type="taxonomic scope" value="Bacteria"/>
</dbReference>
<dbReference type="HOGENOM" id="CLU_063339_3_0_12"/>
<dbReference type="OrthoDB" id="9803963at2"/>
<dbReference type="UniPathway" id="UPA00588">
    <property type="reaction ID" value="UER00646"/>
</dbReference>
<dbReference type="Proteomes" id="UP000000811">
    <property type="component" value="Chromosome"/>
</dbReference>
<dbReference type="GO" id="GO:0005737">
    <property type="term" value="C:cytoplasm"/>
    <property type="evidence" value="ECO:0007669"/>
    <property type="project" value="UniProtKB-SubCell"/>
</dbReference>
<dbReference type="GO" id="GO:0003999">
    <property type="term" value="F:adenine phosphoribosyltransferase activity"/>
    <property type="evidence" value="ECO:0007669"/>
    <property type="project" value="UniProtKB-UniRule"/>
</dbReference>
<dbReference type="GO" id="GO:0006168">
    <property type="term" value="P:adenine salvage"/>
    <property type="evidence" value="ECO:0007669"/>
    <property type="project" value="InterPro"/>
</dbReference>
<dbReference type="GO" id="GO:0044209">
    <property type="term" value="P:AMP salvage"/>
    <property type="evidence" value="ECO:0007669"/>
    <property type="project" value="UniProtKB-UniRule"/>
</dbReference>
<dbReference type="GO" id="GO:0006166">
    <property type="term" value="P:purine ribonucleoside salvage"/>
    <property type="evidence" value="ECO:0007669"/>
    <property type="project" value="UniProtKB-KW"/>
</dbReference>
<dbReference type="CDD" id="cd06223">
    <property type="entry name" value="PRTases_typeI"/>
    <property type="match status" value="1"/>
</dbReference>
<dbReference type="FunFam" id="3.40.50.2020:FF:000021">
    <property type="entry name" value="Adenine phosphoribosyltransferase"/>
    <property type="match status" value="1"/>
</dbReference>
<dbReference type="Gene3D" id="3.40.50.2020">
    <property type="match status" value="1"/>
</dbReference>
<dbReference type="HAMAP" id="MF_00004">
    <property type="entry name" value="Aden_phosphoribosyltr"/>
    <property type="match status" value="1"/>
</dbReference>
<dbReference type="InterPro" id="IPR005764">
    <property type="entry name" value="Ade_phspho_trans"/>
</dbReference>
<dbReference type="InterPro" id="IPR050120">
    <property type="entry name" value="Adenine_PRTase"/>
</dbReference>
<dbReference type="InterPro" id="IPR000836">
    <property type="entry name" value="PRibTrfase_dom"/>
</dbReference>
<dbReference type="InterPro" id="IPR029057">
    <property type="entry name" value="PRTase-like"/>
</dbReference>
<dbReference type="NCBIfam" id="NF002634">
    <property type="entry name" value="PRK02304.1-3"/>
    <property type="match status" value="1"/>
</dbReference>
<dbReference type="NCBIfam" id="NF002636">
    <property type="entry name" value="PRK02304.1-5"/>
    <property type="match status" value="1"/>
</dbReference>
<dbReference type="PANTHER" id="PTHR11776">
    <property type="entry name" value="ADENINE PHOSPHORIBOSYLTRANSFERASE"/>
    <property type="match status" value="1"/>
</dbReference>
<dbReference type="PANTHER" id="PTHR11776:SF7">
    <property type="entry name" value="PHOSPHORIBOSYLTRANSFERASE DOMAIN-CONTAINING PROTEIN"/>
    <property type="match status" value="1"/>
</dbReference>
<dbReference type="Pfam" id="PF00156">
    <property type="entry name" value="Pribosyltran"/>
    <property type="match status" value="1"/>
</dbReference>
<dbReference type="SUPFAM" id="SSF53271">
    <property type="entry name" value="PRTase-like"/>
    <property type="match status" value="1"/>
</dbReference>
<feature type="chain" id="PRO_0000149481" description="Adenine phosphoribosyltransferase">
    <location>
        <begin position="1"/>
        <end position="190"/>
    </location>
</feature>
<keyword id="KW-0963">Cytoplasm</keyword>
<keyword id="KW-0328">Glycosyltransferase</keyword>
<keyword id="KW-0660">Purine salvage</keyword>
<keyword id="KW-1185">Reference proteome</keyword>
<keyword id="KW-0808">Transferase</keyword>
<name>APT_TREPA</name>
<organism>
    <name type="scientific">Treponema pallidum (strain Nichols)</name>
    <dbReference type="NCBI Taxonomy" id="243276"/>
    <lineage>
        <taxon>Bacteria</taxon>
        <taxon>Pseudomonadati</taxon>
        <taxon>Spirochaetota</taxon>
        <taxon>Spirochaetia</taxon>
        <taxon>Spirochaetales</taxon>
        <taxon>Treponemataceae</taxon>
        <taxon>Treponema</taxon>
    </lineage>
</organism>
<proteinExistence type="inferred from homology"/>